<comment type="function">
    <text evidence="1">Member of the two-component regulatory system ArcB/ArcA. Sensor-regulator protein for anaerobic repression of the arc modulon. Activates ArcA via a four-step phosphorelay. ArcB can also dephosphorylate ArcA by a reverse phosphorelay involving His-717 and Asp-576 (By similarity).</text>
</comment>
<comment type="catalytic activity">
    <reaction>
        <text>ATP + protein L-histidine = ADP + protein N-phospho-L-histidine.</text>
        <dbReference type="EC" id="2.7.13.3"/>
    </reaction>
</comment>
<comment type="subcellular location">
    <subcellularLocation>
        <location evidence="1">Cell inner membrane</location>
        <topology evidence="1">Multi-pass membrane protein</topology>
    </subcellularLocation>
</comment>
<comment type="PTM">
    <text evidence="1">Activation requires a sequential transfer of a phosphate group from a His in the primary transmitter domain, to an Asp in the receiver domain and to a His in the secondary transmitter domain.</text>
</comment>
<accession>P0AEC4</accession>
<accession>P22763</accession>
<dbReference type="EC" id="2.7.13.3"/>
<dbReference type="EMBL" id="AE005674">
    <property type="protein sequence ID" value="AAN44715.1"/>
    <property type="molecule type" value="Genomic_DNA"/>
</dbReference>
<dbReference type="EMBL" id="AE014073">
    <property type="protein sequence ID" value="AAP18529.1"/>
    <property type="molecule type" value="Genomic_DNA"/>
</dbReference>
<dbReference type="RefSeq" id="NP_709008.1">
    <property type="nucleotide sequence ID" value="NC_004337.2"/>
</dbReference>
<dbReference type="RefSeq" id="WP_000809774.1">
    <property type="nucleotide sequence ID" value="NZ_WPGW01000004.1"/>
</dbReference>
<dbReference type="BMRB" id="P0AEC4"/>
<dbReference type="SMR" id="P0AEC4"/>
<dbReference type="STRING" id="198214.SF3250"/>
<dbReference type="PaxDb" id="198214-SF3250"/>
<dbReference type="GeneID" id="1027096"/>
<dbReference type="GeneID" id="93778771"/>
<dbReference type="KEGG" id="sfl:SF3250"/>
<dbReference type="KEGG" id="sfx:S3468"/>
<dbReference type="PATRIC" id="fig|198214.7.peg.3852"/>
<dbReference type="HOGENOM" id="CLU_000445_114_15_6"/>
<dbReference type="Proteomes" id="UP000001006">
    <property type="component" value="Chromosome"/>
</dbReference>
<dbReference type="Proteomes" id="UP000002673">
    <property type="component" value="Chromosome"/>
</dbReference>
<dbReference type="GO" id="GO:0005886">
    <property type="term" value="C:plasma membrane"/>
    <property type="evidence" value="ECO:0007669"/>
    <property type="project" value="UniProtKB-SubCell"/>
</dbReference>
<dbReference type="GO" id="GO:0005524">
    <property type="term" value="F:ATP binding"/>
    <property type="evidence" value="ECO:0007669"/>
    <property type="project" value="UniProtKB-KW"/>
</dbReference>
<dbReference type="GO" id="GO:0009927">
    <property type="term" value="F:histidine phosphotransfer kinase activity"/>
    <property type="evidence" value="ECO:0007669"/>
    <property type="project" value="TreeGrafter"/>
</dbReference>
<dbReference type="GO" id="GO:0000155">
    <property type="term" value="F:phosphorelay sensor kinase activity"/>
    <property type="evidence" value="ECO:0007669"/>
    <property type="project" value="InterPro"/>
</dbReference>
<dbReference type="GO" id="GO:0006355">
    <property type="term" value="P:regulation of DNA-templated transcription"/>
    <property type="evidence" value="ECO:0007669"/>
    <property type="project" value="InterPro"/>
</dbReference>
<dbReference type="CDD" id="cd16922">
    <property type="entry name" value="HATPase_EvgS-ArcB-TorS-like"/>
    <property type="match status" value="1"/>
</dbReference>
<dbReference type="CDD" id="cd00082">
    <property type="entry name" value="HisKA"/>
    <property type="match status" value="1"/>
</dbReference>
<dbReference type="CDD" id="cd00088">
    <property type="entry name" value="HPT"/>
    <property type="match status" value="1"/>
</dbReference>
<dbReference type="CDD" id="cd00130">
    <property type="entry name" value="PAS"/>
    <property type="match status" value="1"/>
</dbReference>
<dbReference type="CDD" id="cd17546">
    <property type="entry name" value="REC_hyHK_CKI1_RcsC-like"/>
    <property type="match status" value="1"/>
</dbReference>
<dbReference type="FunFam" id="1.10.287.130:FF:000016">
    <property type="entry name" value="Aerobic respiration control sensor protein"/>
    <property type="match status" value="1"/>
</dbReference>
<dbReference type="FunFam" id="1.10.287.970:FF:000001">
    <property type="entry name" value="Aerobic respiration control sensor protein"/>
    <property type="match status" value="1"/>
</dbReference>
<dbReference type="FunFam" id="1.20.120.160:FF:000003">
    <property type="entry name" value="Aerobic respiration control sensor protein"/>
    <property type="match status" value="1"/>
</dbReference>
<dbReference type="FunFam" id="3.30.450.20:FF:000032">
    <property type="entry name" value="Aerobic respiration control sensor protein"/>
    <property type="match status" value="1"/>
</dbReference>
<dbReference type="FunFam" id="3.30.565.10:FF:000025">
    <property type="entry name" value="Aerobic respiration control sensor protein"/>
    <property type="match status" value="1"/>
</dbReference>
<dbReference type="FunFam" id="3.40.50.2300:FF:000107">
    <property type="entry name" value="Aerobic respiration control sensor protein"/>
    <property type="match status" value="1"/>
</dbReference>
<dbReference type="Gene3D" id="1.10.287.130">
    <property type="match status" value="1"/>
</dbReference>
<dbReference type="Gene3D" id="3.40.50.2300">
    <property type="match status" value="1"/>
</dbReference>
<dbReference type="Gene3D" id="1.10.287.970">
    <property type="entry name" value="His Kinase A (phosphoacceptor) domain"/>
    <property type="match status" value="1"/>
</dbReference>
<dbReference type="Gene3D" id="3.30.565.10">
    <property type="entry name" value="Histidine kinase-like ATPase, C-terminal domain"/>
    <property type="match status" value="1"/>
</dbReference>
<dbReference type="Gene3D" id="1.20.120.160">
    <property type="entry name" value="HPT domain"/>
    <property type="match status" value="1"/>
</dbReference>
<dbReference type="Gene3D" id="3.30.450.20">
    <property type="entry name" value="PAS domain"/>
    <property type="match status" value="1"/>
</dbReference>
<dbReference type="InterPro" id="IPR027460">
    <property type="entry name" value="ArcB_TM_sf"/>
</dbReference>
<dbReference type="InterPro" id="IPR011006">
    <property type="entry name" value="CheY-like_superfamily"/>
</dbReference>
<dbReference type="InterPro" id="IPR036890">
    <property type="entry name" value="HATPase_C_sf"/>
</dbReference>
<dbReference type="InterPro" id="IPR005467">
    <property type="entry name" value="His_kinase_dom"/>
</dbReference>
<dbReference type="InterPro" id="IPR003661">
    <property type="entry name" value="HisK_dim/P_dom"/>
</dbReference>
<dbReference type="InterPro" id="IPR036097">
    <property type="entry name" value="HisK_dim/P_sf"/>
</dbReference>
<dbReference type="InterPro" id="IPR040642">
    <property type="entry name" value="HKR_ArcB_TM"/>
</dbReference>
<dbReference type="InterPro" id="IPR036641">
    <property type="entry name" value="HPT_dom_sf"/>
</dbReference>
<dbReference type="InterPro" id="IPR000014">
    <property type="entry name" value="PAS"/>
</dbReference>
<dbReference type="InterPro" id="IPR000700">
    <property type="entry name" value="PAS-assoc_C"/>
</dbReference>
<dbReference type="InterPro" id="IPR035965">
    <property type="entry name" value="PAS-like_dom_sf"/>
</dbReference>
<dbReference type="InterPro" id="IPR013767">
    <property type="entry name" value="PAS_fold"/>
</dbReference>
<dbReference type="InterPro" id="IPR004358">
    <property type="entry name" value="Sig_transdc_His_kin-like_C"/>
</dbReference>
<dbReference type="InterPro" id="IPR008207">
    <property type="entry name" value="Sig_transdc_His_kin_Hpt_dom"/>
</dbReference>
<dbReference type="InterPro" id="IPR014409">
    <property type="entry name" value="Sig_transdc_His_kin_hyb_ArcB"/>
</dbReference>
<dbReference type="InterPro" id="IPR001789">
    <property type="entry name" value="Sig_transdc_resp-reg_receiver"/>
</dbReference>
<dbReference type="NCBIfam" id="NF008302">
    <property type="entry name" value="PRK11091.1"/>
    <property type="match status" value="1"/>
</dbReference>
<dbReference type="NCBIfam" id="TIGR00229">
    <property type="entry name" value="sensory_box"/>
    <property type="match status" value="1"/>
</dbReference>
<dbReference type="PANTHER" id="PTHR43047:SF72">
    <property type="entry name" value="OSMOSENSING HISTIDINE PROTEIN KINASE SLN1"/>
    <property type="match status" value="1"/>
</dbReference>
<dbReference type="PANTHER" id="PTHR43047">
    <property type="entry name" value="TWO-COMPONENT HISTIDINE PROTEIN KINASE"/>
    <property type="match status" value="1"/>
</dbReference>
<dbReference type="Pfam" id="PF02518">
    <property type="entry name" value="HATPase_c"/>
    <property type="match status" value="1"/>
</dbReference>
<dbReference type="Pfam" id="PF00512">
    <property type="entry name" value="HisKA"/>
    <property type="match status" value="1"/>
</dbReference>
<dbReference type="Pfam" id="PF18415">
    <property type="entry name" value="HKR_ArcB_TM"/>
    <property type="match status" value="1"/>
</dbReference>
<dbReference type="Pfam" id="PF01627">
    <property type="entry name" value="Hpt"/>
    <property type="match status" value="1"/>
</dbReference>
<dbReference type="Pfam" id="PF00989">
    <property type="entry name" value="PAS"/>
    <property type="match status" value="1"/>
</dbReference>
<dbReference type="Pfam" id="PF00072">
    <property type="entry name" value="Response_reg"/>
    <property type="match status" value="1"/>
</dbReference>
<dbReference type="PIRSF" id="PIRSF003182">
    <property type="entry name" value="ArcB"/>
    <property type="match status" value="1"/>
</dbReference>
<dbReference type="PRINTS" id="PR00344">
    <property type="entry name" value="BCTRLSENSOR"/>
</dbReference>
<dbReference type="SMART" id="SM00387">
    <property type="entry name" value="HATPase_c"/>
    <property type="match status" value="1"/>
</dbReference>
<dbReference type="SMART" id="SM00388">
    <property type="entry name" value="HisKA"/>
    <property type="match status" value="1"/>
</dbReference>
<dbReference type="SMART" id="SM00073">
    <property type="entry name" value="HPT"/>
    <property type="match status" value="1"/>
</dbReference>
<dbReference type="SMART" id="SM00091">
    <property type="entry name" value="PAS"/>
    <property type="match status" value="1"/>
</dbReference>
<dbReference type="SMART" id="SM00448">
    <property type="entry name" value="REC"/>
    <property type="match status" value="1"/>
</dbReference>
<dbReference type="SUPFAM" id="SSF55874">
    <property type="entry name" value="ATPase domain of HSP90 chaperone/DNA topoisomerase II/histidine kinase"/>
    <property type="match status" value="1"/>
</dbReference>
<dbReference type="SUPFAM" id="SSF52172">
    <property type="entry name" value="CheY-like"/>
    <property type="match status" value="1"/>
</dbReference>
<dbReference type="SUPFAM" id="SSF47226">
    <property type="entry name" value="Histidine-containing phosphotransfer domain, HPT domain"/>
    <property type="match status" value="1"/>
</dbReference>
<dbReference type="SUPFAM" id="SSF47384">
    <property type="entry name" value="Homodimeric domain of signal transducing histidine kinase"/>
    <property type="match status" value="1"/>
</dbReference>
<dbReference type="SUPFAM" id="SSF55785">
    <property type="entry name" value="PYP-like sensor domain (PAS domain)"/>
    <property type="match status" value="1"/>
</dbReference>
<dbReference type="PROSITE" id="PS50109">
    <property type="entry name" value="HIS_KIN"/>
    <property type="match status" value="1"/>
</dbReference>
<dbReference type="PROSITE" id="PS50894">
    <property type="entry name" value="HPT"/>
    <property type="match status" value="1"/>
</dbReference>
<dbReference type="PROSITE" id="PS50113">
    <property type="entry name" value="PAC"/>
    <property type="match status" value="1"/>
</dbReference>
<dbReference type="PROSITE" id="PS50112">
    <property type="entry name" value="PAS"/>
    <property type="match status" value="1"/>
</dbReference>
<dbReference type="PROSITE" id="PS50110">
    <property type="entry name" value="RESPONSE_REGULATORY"/>
    <property type="match status" value="1"/>
</dbReference>
<sequence length="778" mass="87983">MKQIRLLAQYYVDLMMKLGLVRFSMLLALALVVLAIVVQMAVTMVLHGQVESIDVIRSIFFGLLITPWAVYFLSVVVEQLEESRQRLSRLVQKLEEMRERDLSLNVQLKDNIAQLNQEIAVREKAEAELQETFGQLKIEIKEREETQIQLEQQSSFLRSFLDASPDLVFYRNEDKEFSGCNRAMELLTGKSEKQLVHLKPADVYSPEAAAKVIETDEKVFRHNVSLTYEQWLDYPDGRKACFEIRKVPYYDRVGKRHGLMGFGRDITERKRYQDALERASRDKTTFISTISHELRTPLNGIVGLSRILLDTELTAEQEKYLKTIHVSAVTLGNIFNDIIDMDKMERRKVQLDNQPVDFTSFLADLENLSALQAQQKGLRFNLEPTLPLPHQVITDGTRLRQILWNLISNAVKFTQQGQVTVRVRYDEGDMLHFEVEDSGIGIPQDELDKIFAMYYQVKDSHGGKPATGTGIGLAVSRRLAKNMGGDITVTSEQGKGSTFTLTIHAPSVAEEVDDAFDEDDMPLPALNVLLVEDIELNVIVARSVLEKLGNSVDVAMTGKAALEMFKPGEYDLVLLDIQLPDMTGLDISRELTKRYPREDLPPLVALTANVLKDKQEYLNAGMDDVLSKPLSVPALTAMIKKFWDTQDDEESTVTTEENSKSEALLDIPMLEQYLELVGPKLITDGLAVFEKMMPGYVSVLESNLTAQDKKGIVEEGHKIKGAAGSVGLRHLQQLGQQIQSPDLPAWEDNVGEWIEEMKEEWRHDVEVLKAWVAKATKK</sequence>
<reference key="1">
    <citation type="journal article" date="2002" name="Nucleic Acids Res.">
        <title>Genome sequence of Shigella flexneri 2a: insights into pathogenicity through comparison with genomes of Escherichia coli K12 and O157.</title>
        <authorList>
            <person name="Jin Q."/>
            <person name="Yuan Z."/>
            <person name="Xu J."/>
            <person name="Wang Y."/>
            <person name="Shen Y."/>
            <person name="Lu W."/>
            <person name="Wang J."/>
            <person name="Liu H."/>
            <person name="Yang J."/>
            <person name="Yang F."/>
            <person name="Zhang X."/>
            <person name="Zhang J."/>
            <person name="Yang G."/>
            <person name="Wu H."/>
            <person name="Qu D."/>
            <person name="Dong J."/>
            <person name="Sun L."/>
            <person name="Xue Y."/>
            <person name="Zhao A."/>
            <person name="Gao Y."/>
            <person name="Zhu J."/>
            <person name="Kan B."/>
            <person name="Ding K."/>
            <person name="Chen S."/>
            <person name="Cheng H."/>
            <person name="Yao Z."/>
            <person name="He B."/>
            <person name="Chen R."/>
            <person name="Ma D."/>
            <person name="Qiang B."/>
            <person name="Wen Y."/>
            <person name="Hou Y."/>
            <person name="Yu J."/>
        </authorList>
    </citation>
    <scope>NUCLEOTIDE SEQUENCE [LARGE SCALE GENOMIC DNA]</scope>
    <source>
        <strain>301 / Serotype 2a</strain>
    </source>
</reference>
<reference key="2">
    <citation type="journal article" date="2003" name="Infect. Immun.">
        <title>Complete genome sequence and comparative genomics of Shigella flexneri serotype 2a strain 2457T.</title>
        <authorList>
            <person name="Wei J."/>
            <person name="Goldberg M.B."/>
            <person name="Burland V."/>
            <person name="Venkatesan M.M."/>
            <person name="Deng W."/>
            <person name="Fournier G."/>
            <person name="Mayhew G.F."/>
            <person name="Plunkett G. III"/>
            <person name="Rose D.J."/>
            <person name="Darling A."/>
            <person name="Mau B."/>
            <person name="Perna N.T."/>
            <person name="Payne S.M."/>
            <person name="Runyen-Janecky L.J."/>
            <person name="Zhou S."/>
            <person name="Schwartz D.C."/>
            <person name="Blattner F.R."/>
        </authorList>
    </citation>
    <scope>NUCLEOTIDE SEQUENCE [LARGE SCALE GENOMIC DNA]</scope>
    <source>
        <strain>ATCC 700930 / 2457T / Serotype 2a</strain>
    </source>
</reference>
<gene>
    <name type="primary">arcB</name>
    <name type="ordered locus">SF3250</name>
    <name type="ordered locus">S3468</name>
</gene>
<keyword id="KW-0067">ATP-binding</keyword>
<keyword id="KW-0997">Cell inner membrane</keyword>
<keyword id="KW-1003">Cell membrane</keyword>
<keyword id="KW-0418">Kinase</keyword>
<keyword id="KW-0472">Membrane</keyword>
<keyword id="KW-0547">Nucleotide-binding</keyword>
<keyword id="KW-0597">Phosphoprotein</keyword>
<keyword id="KW-1185">Reference proteome</keyword>
<keyword id="KW-0804">Transcription</keyword>
<keyword id="KW-0805">Transcription regulation</keyword>
<keyword id="KW-0808">Transferase</keyword>
<keyword id="KW-0812">Transmembrane</keyword>
<keyword id="KW-1133">Transmembrane helix</keyword>
<keyword id="KW-0902">Two-component regulatory system</keyword>
<organism>
    <name type="scientific">Shigella flexneri</name>
    <dbReference type="NCBI Taxonomy" id="623"/>
    <lineage>
        <taxon>Bacteria</taxon>
        <taxon>Pseudomonadati</taxon>
        <taxon>Pseudomonadota</taxon>
        <taxon>Gammaproteobacteria</taxon>
        <taxon>Enterobacterales</taxon>
        <taxon>Enterobacteriaceae</taxon>
        <taxon>Shigella</taxon>
    </lineage>
</organism>
<proteinExistence type="inferred from homology"/>
<feature type="chain" id="PRO_0000074687" description="Aerobic respiration control sensor protein ArcB">
    <location>
        <begin position="1"/>
        <end position="778"/>
    </location>
</feature>
<feature type="topological domain" description="Cytoplasmic" evidence="2">
    <location>
        <begin position="1"/>
        <end position="25"/>
    </location>
</feature>
<feature type="transmembrane region" description="Helical" evidence="2">
    <location>
        <begin position="26"/>
        <end position="46"/>
    </location>
</feature>
<feature type="topological domain" description="Periplasmic" evidence="2">
    <location>
        <begin position="47"/>
        <end position="57"/>
    </location>
</feature>
<feature type="transmembrane region" description="Helical" evidence="2">
    <location>
        <begin position="58"/>
        <end position="78"/>
    </location>
</feature>
<feature type="topological domain" description="Cytoplasmic" evidence="2">
    <location>
        <begin position="79"/>
        <end position="778"/>
    </location>
</feature>
<feature type="domain" description="PAS" evidence="5">
    <location>
        <begin position="153"/>
        <end position="223"/>
    </location>
</feature>
<feature type="domain" description="PAC" evidence="6">
    <location>
        <begin position="226"/>
        <end position="278"/>
    </location>
</feature>
<feature type="domain" description="Histidine kinase" evidence="3">
    <location>
        <begin position="289"/>
        <end position="507"/>
    </location>
</feature>
<feature type="domain" description="Response regulatory" evidence="7">
    <location>
        <begin position="527"/>
        <end position="643"/>
    </location>
</feature>
<feature type="domain" description="HPt" evidence="4">
    <location>
        <begin position="678"/>
        <end position="771"/>
    </location>
</feature>
<feature type="modified residue" description="Phosphohistidine; by autocatalysis" evidence="3">
    <location>
        <position position="292"/>
    </location>
</feature>
<feature type="modified residue" description="4-aspartylphosphate" evidence="7">
    <location>
        <position position="576"/>
    </location>
</feature>
<feature type="modified residue" description="Phosphohistidine" evidence="4">
    <location>
        <position position="717"/>
    </location>
</feature>
<protein>
    <recommendedName>
        <fullName>Aerobic respiration control sensor protein ArcB</fullName>
        <ecNumber>2.7.13.3</ecNumber>
    </recommendedName>
</protein>
<evidence type="ECO:0000250" key="1"/>
<evidence type="ECO:0000255" key="2"/>
<evidence type="ECO:0000255" key="3">
    <source>
        <dbReference type="PROSITE-ProRule" id="PRU00107"/>
    </source>
</evidence>
<evidence type="ECO:0000255" key="4">
    <source>
        <dbReference type="PROSITE-ProRule" id="PRU00110"/>
    </source>
</evidence>
<evidence type="ECO:0000255" key="5">
    <source>
        <dbReference type="PROSITE-ProRule" id="PRU00140"/>
    </source>
</evidence>
<evidence type="ECO:0000255" key="6">
    <source>
        <dbReference type="PROSITE-ProRule" id="PRU00141"/>
    </source>
</evidence>
<evidence type="ECO:0000255" key="7">
    <source>
        <dbReference type="PROSITE-ProRule" id="PRU00169"/>
    </source>
</evidence>
<name>ARCB_SHIFL</name>